<comment type="function">
    <text evidence="1">With S4 and S12 plays an important role in translational accuracy.</text>
</comment>
<comment type="function">
    <text evidence="1">Located at the back of the 30S subunit body where it stabilizes the conformation of the head with respect to the body.</text>
</comment>
<comment type="subunit">
    <text evidence="1">Part of the 30S ribosomal subunit. Contacts proteins S4 and S8.</text>
</comment>
<comment type="domain">
    <text>The N-terminal domain interacts with the head of the 30S subunit; the C-terminal domain interacts with the body and contacts protein S4. The interaction surface between S4 and S5 is involved in control of translational fidelity.</text>
</comment>
<comment type="similarity">
    <text evidence="1">Belongs to the universal ribosomal protein uS5 family.</text>
</comment>
<evidence type="ECO:0000255" key="1">
    <source>
        <dbReference type="HAMAP-Rule" id="MF_01307"/>
    </source>
</evidence>
<evidence type="ECO:0000305" key="2"/>
<reference key="1">
    <citation type="journal article" date="2006" name="PLoS Biol.">
        <title>Metabolic complementarity and genomics of the dual bacterial symbiosis of sharpshooters.</title>
        <authorList>
            <person name="Wu D."/>
            <person name="Daugherty S.C."/>
            <person name="Van Aken S.E."/>
            <person name="Pai G.H."/>
            <person name="Watkins K.L."/>
            <person name="Khouri H."/>
            <person name="Tallon L.J."/>
            <person name="Zaborsky J.M."/>
            <person name="Dunbar H.E."/>
            <person name="Tran P.L."/>
            <person name="Moran N.A."/>
            <person name="Eisen J.A."/>
        </authorList>
    </citation>
    <scope>NUCLEOTIDE SEQUENCE [LARGE SCALE GENOMIC DNA]</scope>
</reference>
<feature type="chain" id="PRO_0000323076" description="Small ribosomal subunit protein uS5">
    <location>
        <begin position="1"/>
        <end position="167"/>
    </location>
</feature>
<feature type="domain" description="S5 DRBM" evidence="1">
    <location>
        <begin position="11"/>
        <end position="74"/>
    </location>
</feature>
<organism>
    <name type="scientific">Baumannia cicadellinicola subsp. Homalodisca coagulata</name>
    <dbReference type="NCBI Taxonomy" id="374463"/>
    <lineage>
        <taxon>Bacteria</taxon>
        <taxon>Pseudomonadati</taxon>
        <taxon>Pseudomonadota</taxon>
        <taxon>Gammaproteobacteria</taxon>
        <taxon>Candidatus Palibaumannia</taxon>
    </lineage>
</organism>
<accession>Q1LTC1</accession>
<gene>
    <name evidence="1" type="primary">rpsE</name>
    <name type="ordered locus">BCI_0345</name>
</gene>
<dbReference type="EMBL" id="CP000238">
    <property type="protein sequence ID" value="ABF13957.1"/>
    <property type="molecule type" value="Genomic_DNA"/>
</dbReference>
<dbReference type="RefSeq" id="WP_011520526.1">
    <property type="nucleotide sequence ID" value="NC_007984.1"/>
</dbReference>
<dbReference type="SMR" id="Q1LTC1"/>
<dbReference type="STRING" id="374463.BCI_0345"/>
<dbReference type="KEGG" id="bci:BCI_0345"/>
<dbReference type="HOGENOM" id="CLU_065898_2_2_6"/>
<dbReference type="OrthoDB" id="9809045at2"/>
<dbReference type="Proteomes" id="UP000002427">
    <property type="component" value="Chromosome"/>
</dbReference>
<dbReference type="GO" id="GO:0015935">
    <property type="term" value="C:small ribosomal subunit"/>
    <property type="evidence" value="ECO:0007669"/>
    <property type="project" value="InterPro"/>
</dbReference>
<dbReference type="GO" id="GO:0019843">
    <property type="term" value="F:rRNA binding"/>
    <property type="evidence" value="ECO:0007669"/>
    <property type="project" value="UniProtKB-UniRule"/>
</dbReference>
<dbReference type="GO" id="GO:0003735">
    <property type="term" value="F:structural constituent of ribosome"/>
    <property type="evidence" value="ECO:0007669"/>
    <property type="project" value="InterPro"/>
</dbReference>
<dbReference type="GO" id="GO:0006412">
    <property type="term" value="P:translation"/>
    <property type="evidence" value="ECO:0007669"/>
    <property type="project" value="UniProtKB-UniRule"/>
</dbReference>
<dbReference type="FunFam" id="3.30.160.20:FF:000001">
    <property type="entry name" value="30S ribosomal protein S5"/>
    <property type="match status" value="1"/>
</dbReference>
<dbReference type="FunFam" id="3.30.230.10:FF:000002">
    <property type="entry name" value="30S ribosomal protein S5"/>
    <property type="match status" value="1"/>
</dbReference>
<dbReference type="Gene3D" id="3.30.160.20">
    <property type="match status" value="1"/>
</dbReference>
<dbReference type="Gene3D" id="3.30.230.10">
    <property type="match status" value="1"/>
</dbReference>
<dbReference type="HAMAP" id="MF_01307_B">
    <property type="entry name" value="Ribosomal_uS5_B"/>
    <property type="match status" value="1"/>
</dbReference>
<dbReference type="InterPro" id="IPR020568">
    <property type="entry name" value="Ribosomal_Su5_D2-typ_SF"/>
</dbReference>
<dbReference type="InterPro" id="IPR000851">
    <property type="entry name" value="Ribosomal_uS5"/>
</dbReference>
<dbReference type="InterPro" id="IPR005712">
    <property type="entry name" value="Ribosomal_uS5_bac-type"/>
</dbReference>
<dbReference type="InterPro" id="IPR005324">
    <property type="entry name" value="Ribosomal_uS5_C"/>
</dbReference>
<dbReference type="InterPro" id="IPR013810">
    <property type="entry name" value="Ribosomal_uS5_N"/>
</dbReference>
<dbReference type="InterPro" id="IPR018192">
    <property type="entry name" value="Ribosomal_uS5_N_CS"/>
</dbReference>
<dbReference type="InterPro" id="IPR014721">
    <property type="entry name" value="Ribsml_uS5_D2-typ_fold_subgr"/>
</dbReference>
<dbReference type="NCBIfam" id="TIGR01021">
    <property type="entry name" value="rpsE_bact"/>
    <property type="match status" value="1"/>
</dbReference>
<dbReference type="PANTHER" id="PTHR48277">
    <property type="entry name" value="MITOCHONDRIAL RIBOSOMAL PROTEIN S5"/>
    <property type="match status" value="1"/>
</dbReference>
<dbReference type="PANTHER" id="PTHR48277:SF1">
    <property type="entry name" value="MITOCHONDRIAL RIBOSOMAL PROTEIN S5"/>
    <property type="match status" value="1"/>
</dbReference>
<dbReference type="Pfam" id="PF00333">
    <property type="entry name" value="Ribosomal_S5"/>
    <property type="match status" value="1"/>
</dbReference>
<dbReference type="Pfam" id="PF03719">
    <property type="entry name" value="Ribosomal_S5_C"/>
    <property type="match status" value="1"/>
</dbReference>
<dbReference type="SUPFAM" id="SSF54768">
    <property type="entry name" value="dsRNA-binding domain-like"/>
    <property type="match status" value="1"/>
</dbReference>
<dbReference type="SUPFAM" id="SSF54211">
    <property type="entry name" value="Ribosomal protein S5 domain 2-like"/>
    <property type="match status" value="1"/>
</dbReference>
<dbReference type="PROSITE" id="PS00585">
    <property type="entry name" value="RIBOSOMAL_S5"/>
    <property type="match status" value="1"/>
</dbReference>
<dbReference type="PROSITE" id="PS50881">
    <property type="entry name" value="S5_DSRBD"/>
    <property type="match status" value="1"/>
</dbReference>
<protein>
    <recommendedName>
        <fullName evidence="1">Small ribosomal subunit protein uS5</fullName>
    </recommendedName>
    <alternativeName>
        <fullName evidence="2">30S ribosomal protein S5</fullName>
    </alternativeName>
</protein>
<keyword id="KW-1185">Reference proteome</keyword>
<keyword id="KW-0687">Ribonucleoprotein</keyword>
<keyword id="KW-0689">Ribosomal protein</keyword>
<keyword id="KW-0694">RNA-binding</keyword>
<keyword id="KW-0699">rRNA-binding</keyword>
<proteinExistence type="inferred from homology"/>
<name>RS5_BAUCH</name>
<sequence length="167" mass="17919">MVHIEKQISDLQEKLIAVNRVSKTVKGGRIFSFTALTVVGDSNGRVGFGYGKAREVPTAIQKAMDKARRNMTTIVLNSGGTLQHSIKGVHTGSRVFMQPASEGTGIIAGGAMRAVLEVTGIRNVLAKTYGSTNPINVVRATINALNKMKSPEMIAAKRGKTIEEILR</sequence>